<evidence type="ECO:0000255" key="1">
    <source>
        <dbReference type="HAMAP-Rule" id="MF_00167"/>
    </source>
</evidence>
<feature type="chain" id="PRO_1000097474" description="Translational regulator CsrA">
    <location>
        <begin position="1"/>
        <end position="84"/>
    </location>
</feature>
<reference key="1">
    <citation type="journal article" date="2008" name="PLoS ONE">
        <title>Comparative analysis of Acinetobacters: three genomes for three lifestyles.</title>
        <authorList>
            <person name="Vallenet D."/>
            <person name="Nordmann P."/>
            <person name="Barbe V."/>
            <person name="Poirel L."/>
            <person name="Mangenot S."/>
            <person name="Bataille E."/>
            <person name="Dossat C."/>
            <person name="Gas S."/>
            <person name="Kreimeyer A."/>
            <person name="Lenoble P."/>
            <person name="Oztas S."/>
            <person name="Poulain J."/>
            <person name="Segurens B."/>
            <person name="Robert C."/>
            <person name="Abergel C."/>
            <person name="Claverie J.-M."/>
            <person name="Raoult D."/>
            <person name="Medigue C."/>
            <person name="Weissenbach J."/>
            <person name="Cruveiller S."/>
        </authorList>
    </citation>
    <scope>NUCLEOTIDE SEQUENCE [LARGE SCALE GENOMIC DNA]</scope>
    <source>
        <strain>AYE</strain>
    </source>
</reference>
<protein>
    <recommendedName>
        <fullName evidence="1">Translational regulator CsrA</fullName>
    </recommendedName>
    <alternativeName>
        <fullName evidence="1">Carbon storage regulator</fullName>
    </alternativeName>
</protein>
<dbReference type="EMBL" id="CU459141">
    <property type="protein sequence ID" value="CAM87434.1"/>
    <property type="molecule type" value="Genomic_DNA"/>
</dbReference>
<dbReference type="RefSeq" id="WP_000906487.1">
    <property type="nucleotide sequence ID" value="NZ_JBDGFB010000007.1"/>
</dbReference>
<dbReference type="SMR" id="B0VAI5"/>
<dbReference type="EnsemblBacteria" id="CAM87434">
    <property type="protein sequence ID" value="CAM87434"/>
    <property type="gene ID" value="ABAYE2597"/>
</dbReference>
<dbReference type="GeneID" id="92893212"/>
<dbReference type="KEGG" id="aby:ABAYE2597"/>
<dbReference type="HOGENOM" id="CLU_164837_2_1_6"/>
<dbReference type="GO" id="GO:0005829">
    <property type="term" value="C:cytosol"/>
    <property type="evidence" value="ECO:0007669"/>
    <property type="project" value="TreeGrafter"/>
</dbReference>
<dbReference type="GO" id="GO:0048027">
    <property type="term" value="F:mRNA 5'-UTR binding"/>
    <property type="evidence" value="ECO:0007669"/>
    <property type="project" value="UniProtKB-UniRule"/>
</dbReference>
<dbReference type="GO" id="GO:0006402">
    <property type="term" value="P:mRNA catabolic process"/>
    <property type="evidence" value="ECO:0007669"/>
    <property type="project" value="InterPro"/>
</dbReference>
<dbReference type="GO" id="GO:0045947">
    <property type="term" value="P:negative regulation of translational initiation"/>
    <property type="evidence" value="ECO:0007669"/>
    <property type="project" value="UniProtKB-UniRule"/>
</dbReference>
<dbReference type="GO" id="GO:0045948">
    <property type="term" value="P:positive regulation of translational initiation"/>
    <property type="evidence" value="ECO:0007669"/>
    <property type="project" value="UniProtKB-UniRule"/>
</dbReference>
<dbReference type="GO" id="GO:0006109">
    <property type="term" value="P:regulation of carbohydrate metabolic process"/>
    <property type="evidence" value="ECO:0007669"/>
    <property type="project" value="UniProtKB-UniRule"/>
</dbReference>
<dbReference type="FunFam" id="2.60.40.4380:FF:000001">
    <property type="entry name" value="Translational regulator CsrA"/>
    <property type="match status" value="1"/>
</dbReference>
<dbReference type="Gene3D" id="2.60.40.4380">
    <property type="entry name" value="Translational regulator CsrA"/>
    <property type="match status" value="1"/>
</dbReference>
<dbReference type="HAMAP" id="MF_00167">
    <property type="entry name" value="CsrA"/>
    <property type="match status" value="1"/>
</dbReference>
<dbReference type="InterPro" id="IPR003751">
    <property type="entry name" value="CsrA"/>
</dbReference>
<dbReference type="InterPro" id="IPR036107">
    <property type="entry name" value="CsrA_sf"/>
</dbReference>
<dbReference type="NCBIfam" id="TIGR00202">
    <property type="entry name" value="csrA"/>
    <property type="match status" value="1"/>
</dbReference>
<dbReference type="NCBIfam" id="NF002469">
    <property type="entry name" value="PRK01712.1"/>
    <property type="match status" value="1"/>
</dbReference>
<dbReference type="PANTHER" id="PTHR34984">
    <property type="entry name" value="CARBON STORAGE REGULATOR"/>
    <property type="match status" value="1"/>
</dbReference>
<dbReference type="PANTHER" id="PTHR34984:SF1">
    <property type="entry name" value="CARBON STORAGE REGULATOR"/>
    <property type="match status" value="1"/>
</dbReference>
<dbReference type="Pfam" id="PF02599">
    <property type="entry name" value="CsrA"/>
    <property type="match status" value="1"/>
</dbReference>
<dbReference type="SUPFAM" id="SSF117130">
    <property type="entry name" value="CsrA-like"/>
    <property type="match status" value="1"/>
</dbReference>
<sequence length="84" mass="9846">MLILTRRVGETLMIGDQVSVTVLGVKGNQVRIGVNAPKEVSVHREEIYQRIQHERAMHEHLQHLDQDYQVSYEDDNYAQKNFNR</sequence>
<keyword id="KW-0010">Activator</keyword>
<keyword id="KW-0963">Cytoplasm</keyword>
<keyword id="KW-0678">Repressor</keyword>
<keyword id="KW-0694">RNA-binding</keyword>
<keyword id="KW-0810">Translation regulation</keyword>
<accession>B0VAI5</accession>
<comment type="function">
    <text evidence="1">A key translational regulator that binds mRNA to regulate translation initiation and/or mRNA stability. Mediates global changes in gene expression, shifting from rapid growth to stress survival by linking envelope stress, the stringent response and the catabolite repression systems. Usually binds in the 5'-UTR; binding at or near the Shine-Dalgarno sequence prevents ribosome-binding, repressing translation, binding elsewhere in the 5'-UTR can activate translation and/or stabilize the mRNA. Its function is antagonized by small RNA(s).</text>
</comment>
<comment type="subunit">
    <text evidence="1">Homodimer; the beta-strands of each monomer intercalate to form a hydrophobic core, while the alpha-helices form wings that extend away from the core.</text>
</comment>
<comment type="subcellular location">
    <subcellularLocation>
        <location evidence="1">Cytoplasm</location>
    </subcellularLocation>
</comment>
<comment type="similarity">
    <text evidence="1">Belongs to the CsrA/RsmA family.</text>
</comment>
<proteinExistence type="inferred from homology"/>
<organism>
    <name type="scientific">Acinetobacter baumannii (strain AYE)</name>
    <dbReference type="NCBI Taxonomy" id="509173"/>
    <lineage>
        <taxon>Bacteria</taxon>
        <taxon>Pseudomonadati</taxon>
        <taxon>Pseudomonadota</taxon>
        <taxon>Gammaproteobacteria</taxon>
        <taxon>Moraxellales</taxon>
        <taxon>Moraxellaceae</taxon>
        <taxon>Acinetobacter</taxon>
        <taxon>Acinetobacter calcoaceticus/baumannii complex</taxon>
    </lineage>
</organism>
<name>CSRA_ACIBY</name>
<gene>
    <name evidence="1" type="primary">csrA</name>
    <name type="ordered locus">ABAYE2597</name>
</gene>